<evidence type="ECO:0000250" key="1">
    <source>
        <dbReference type="UniProtKB" id="P42126"/>
    </source>
</evidence>
<evidence type="ECO:0000269" key="2">
    <source>
    </source>
</evidence>
<evidence type="ECO:0000303" key="3">
    <source>
    </source>
</evidence>
<evidence type="ECO:0000305" key="4"/>
<evidence type="ECO:0000312" key="5">
    <source>
        <dbReference type="Araport" id="AT1G65520"/>
    </source>
</evidence>
<evidence type="ECO:0000312" key="6">
    <source>
        <dbReference type="EMBL" id="AAB60906.1"/>
    </source>
</evidence>
<proteinExistence type="evidence at protein level"/>
<keyword id="KW-0276">Fatty acid metabolism</keyword>
<keyword id="KW-0413">Isomerase</keyword>
<keyword id="KW-0443">Lipid metabolism</keyword>
<keyword id="KW-0576">Peroxisome</keyword>
<keyword id="KW-1185">Reference proteome</keyword>
<name>ECI1_ARATH</name>
<organism>
    <name type="scientific">Arabidopsis thaliana</name>
    <name type="common">Mouse-ear cress</name>
    <dbReference type="NCBI Taxonomy" id="3702"/>
    <lineage>
        <taxon>Eukaryota</taxon>
        <taxon>Viridiplantae</taxon>
        <taxon>Streptophyta</taxon>
        <taxon>Embryophyta</taxon>
        <taxon>Tracheophyta</taxon>
        <taxon>Spermatophyta</taxon>
        <taxon>Magnoliopsida</taxon>
        <taxon>eudicotyledons</taxon>
        <taxon>Gunneridae</taxon>
        <taxon>Pentapetalae</taxon>
        <taxon>rosids</taxon>
        <taxon>malvids</taxon>
        <taxon>Brassicales</taxon>
        <taxon>Brassicaceae</taxon>
        <taxon>Camelineae</taxon>
        <taxon>Arabidopsis</taxon>
    </lineage>
</organism>
<protein>
    <recommendedName>
        <fullName evidence="4">Enoyl-CoA delta isomerase 1, peroxisomal</fullName>
        <ecNumber evidence="2">5.3.3.8</ecNumber>
    </recommendedName>
    <alternativeName>
        <fullName evidence="3">Delta(3),Delta(2)-enoyl CoA isomerase 1</fullName>
        <shortName evidence="3">AtECI1</shortName>
    </alternativeName>
</protein>
<accession>O04469</accession>
<accession>Q0WPJ6</accession>
<gene>
    <name evidence="3" type="primary">ECI1</name>
    <name evidence="5" type="ordered locus">At1g65520</name>
    <name evidence="6" type="ORF">F5I14.5</name>
</gene>
<feature type="chain" id="PRO_0000432484" description="Enoyl-CoA delta isomerase 1, peroxisomal">
    <location>
        <begin position="1"/>
        <end position="240"/>
    </location>
</feature>
<feature type="short sequence motif" description="Microbody targeting signal" evidence="4">
    <location>
        <begin position="238"/>
        <end position="240"/>
    </location>
</feature>
<feature type="site" description="Important for catalytic activity" evidence="1">
    <location>
        <position position="130"/>
    </location>
</feature>
<reference key="1">
    <citation type="journal article" date="2000" name="Nature">
        <title>Sequence and analysis of chromosome 1 of the plant Arabidopsis thaliana.</title>
        <authorList>
            <person name="Theologis A."/>
            <person name="Ecker J.R."/>
            <person name="Palm C.J."/>
            <person name="Federspiel N.A."/>
            <person name="Kaul S."/>
            <person name="White O."/>
            <person name="Alonso J."/>
            <person name="Altafi H."/>
            <person name="Araujo R."/>
            <person name="Bowman C.L."/>
            <person name="Brooks S.Y."/>
            <person name="Buehler E."/>
            <person name="Chan A."/>
            <person name="Chao Q."/>
            <person name="Chen H."/>
            <person name="Cheuk R.F."/>
            <person name="Chin C.W."/>
            <person name="Chung M.K."/>
            <person name="Conn L."/>
            <person name="Conway A.B."/>
            <person name="Conway A.R."/>
            <person name="Creasy T.H."/>
            <person name="Dewar K."/>
            <person name="Dunn P."/>
            <person name="Etgu P."/>
            <person name="Feldblyum T.V."/>
            <person name="Feng J.-D."/>
            <person name="Fong B."/>
            <person name="Fujii C.Y."/>
            <person name="Gill J.E."/>
            <person name="Goldsmith A.D."/>
            <person name="Haas B."/>
            <person name="Hansen N.F."/>
            <person name="Hughes B."/>
            <person name="Huizar L."/>
            <person name="Hunter J.L."/>
            <person name="Jenkins J."/>
            <person name="Johnson-Hopson C."/>
            <person name="Khan S."/>
            <person name="Khaykin E."/>
            <person name="Kim C.J."/>
            <person name="Koo H.L."/>
            <person name="Kremenetskaia I."/>
            <person name="Kurtz D.B."/>
            <person name="Kwan A."/>
            <person name="Lam B."/>
            <person name="Langin-Hooper S."/>
            <person name="Lee A."/>
            <person name="Lee J.M."/>
            <person name="Lenz C.A."/>
            <person name="Li J.H."/>
            <person name="Li Y.-P."/>
            <person name="Lin X."/>
            <person name="Liu S.X."/>
            <person name="Liu Z.A."/>
            <person name="Luros J.S."/>
            <person name="Maiti R."/>
            <person name="Marziali A."/>
            <person name="Militscher J."/>
            <person name="Miranda M."/>
            <person name="Nguyen M."/>
            <person name="Nierman W.C."/>
            <person name="Osborne B.I."/>
            <person name="Pai G."/>
            <person name="Peterson J."/>
            <person name="Pham P.K."/>
            <person name="Rizzo M."/>
            <person name="Rooney T."/>
            <person name="Rowley D."/>
            <person name="Sakano H."/>
            <person name="Salzberg S.L."/>
            <person name="Schwartz J.R."/>
            <person name="Shinn P."/>
            <person name="Southwick A.M."/>
            <person name="Sun H."/>
            <person name="Tallon L.J."/>
            <person name="Tambunga G."/>
            <person name="Toriumi M.J."/>
            <person name="Town C.D."/>
            <person name="Utterback T."/>
            <person name="Van Aken S."/>
            <person name="Vaysberg M."/>
            <person name="Vysotskaia V.S."/>
            <person name="Walker M."/>
            <person name="Wu D."/>
            <person name="Yu G."/>
            <person name="Fraser C.M."/>
            <person name="Venter J.C."/>
            <person name="Davis R.W."/>
        </authorList>
    </citation>
    <scope>NUCLEOTIDE SEQUENCE [LARGE SCALE GENOMIC DNA]</scope>
    <source>
        <strain>cv. Columbia</strain>
    </source>
</reference>
<reference key="2">
    <citation type="journal article" date="2017" name="Plant J.">
        <title>Araport11: a complete reannotation of the Arabidopsis thaliana reference genome.</title>
        <authorList>
            <person name="Cheng C.Y."/>
            <person name="Krishnakumar V."/>
            <person name="Chan A.P."/>
            <person name="Thibaud-Nissen F."/>
            <person name="Schobel S."/>
            <person name="Town C.D."/>
        </authorList>
    </citation>
    <scope>GENOME REANNOTATION</scope>
    <source>
        <strain>cv. Columbia</strain>
    </source>
</reference>
<reference key="3">
    <citation type="submission" date="2004-04" db="EMBL/GenBank/DDBJ databases">
        <title>Arabidopsis ORF clones.</title>
        <authorList>
            <person name="Shinn P."/>
            <person name="Chen H."/>
            <person name="Cheuk R.F."/>
            <person name="Kim C.J."/>
            <person name="Ecker J.R."/>
        </authorList>
    </citation>
    <scope>NUCLEOTIDE SEQUENCE [LARGE SCALE MRNA]</scope>
    <source>
        <strain>cv. Columbia</strain>
    </source>
</reference>
<reference key="4">
    <citation type="submission" date="2006-07" db="EMBL/GenBank/DDBJ databases">
        <title>Large-scale analysis of RIKEN Arabidopsis full-length (RAFL) cDNAs.</title>
        <authorList>
            <person name="Totoki Y."/>
            <person name="Seki M."/>
            <person name="Ishida J."/>
            <person name="Nakajima M."/>
            <person name="Enju A."/>
            <person name="Kamiya A."/>
            <person name="Narusaka M."/>
            <person name="Shin-i T."/>
            <person name="Nakagawa M."/>
            <person name="Sakamoto N."/>
            <person name="Oishi K."/>
            <person name="Kohara Y."/>
            <person name="Kobayashi M."/>
            <person name="Toyoda A."/>
            <person name="Sakaki Y."/>
            <person name="Sakurai T."/>
            <person name="Iida K."/>
            <person name="Akiyama K."/>
            <person name="Satou M."/>
            <person name="Toyoda T."/>
            <person name="Konagaya A."/>
            <person name="Carninci P."/>
            <person name="Kawai J."/>
            <person name="Hayashizaki Y."/>
            <person name="Shinozaki K."/>
        </authorList>
    </citation>
    <scope>NUCLEOTIDE SEQUENCE [LARGE SCALE MRNA] OF 2-240</scope>
    <source>
        <strain>cv. Columbia</strain>
    </source>
</reference>
<reference key="5">
    <citation type="journal article" date="2007" name="Plant Cell">
        <title>Proteome analysis of Arabidopsis leaf peroxisomes reveals novel targeting peptides, metabolic pathways, and defense mechanisms.</title>
        <authorList>
            <person name="Reumann S."/>
            <person name="Babujee L."/>
            <person name="Ma C."/>
            <person name="Wienkoop S."/>
            <person name="Siemsen T."/>
            <person name="Antonicelli G.E."/>
            <person name="Rasche N."/>
            <person name="Lueder F."/>
            <person name="Weckwerth W."/>
            <person name="Jahn O."/>
        </authorList>
    </citation>
    <scope>IDENTIFICATION BY MASS SPECTROMETRY</scope>
</reference>
<reference key="6">
    <citation type="journal article" date="2008" name="Plant J.">
        <title>Peroxisomal Delta(3),Delta(2)-enoyl CoA isomerases and evolution of cytosolic paralogues in embryophytes.</title>
        <authorList>
            <person name="Goepfert S."/>
            <person name="Vidoudez C."/>
            <person name="Tellgren-Roth C."/>
            <person name="Delessert S."/>
            <person name="Hiltunen J.K."/>
            <person name="Poirier Y."/>
        </authorList>
    </citation>
    <scope>FUNCTION</scope>
    <scope>CATALYTIC ACTIVITY</scope>
    <scope>SUBCELLULAR LOCATION</scope>
    <scope>GENE FAMILY</scope>
</reference>
<dbReference type="EC" id="5.3.3.8" evidence="2"/>
<dbReference type="EMBL" id="AC001229">
    <property type="protein sequence ID" value="AAB60906.1"/>
    <property type="molecule type" value="Genomic_DNA"/>
</dbReference>
<dbReference type="EMBL" id="CP002684">
    <property type="protein sequence ID" value="AEE34392.1"/>
    <property type="molecule type" value="Genomic_DNA"/>
</dbReference>
<dbReference type="EMBL" id="BT010695">
    <property type="protein sequence ID" value="AAR20752.1"/>
    <property type="molecule type" value="mRNA"/>
</dbReference>
<dbReference type="EMBL" id="BT012425">
    <property type="protein sequence ID" value="AAS92341.1"/>
    <property type="molecule type" value="mRNA"/>
</dbReference>
<dbReference type="EMBL" id="AK229072">
    <property type="protein sequence ID" value="BAF00953.1"/>
    <property type="molecule type" value="mRNA"/>
</dbReference>
<dbReference type="PIR" id="A96680">
    <property type="entry name" value="A96680"/>
</dbReference>
<dbReference type="RefSeq" id="NP_176730.1">
    <property type="nucleotide sequence ID" value="NM_105226.4"/>
</dbReference>
<dbReference type="SMR" id="O04469"/>
<dbReference type="FunCoup" id="O04469">
    <property type="interactions" value="6"/>
</dbReference>
<dbReference type="STRING" id="3702.O04469"/>
<dbReference type="PaxDb" id="3702-AT1G65520.1"/>
<dbReference type="ProteomicsDB" id="224721"/>
<dbReference type="EnsemblPlants" id="AT1G65520.1">
    <property type="protein sequence ID" value="AT1G65520.1"/>
    <property type="gene ID" value="AT1G65520"/>
</dbReference>
<dbReference type="GeneID" id="842864"/>
<dbReference type="Gramene" id="AT1G65520.1">
    <property type="protein sequence ID" value="AT1G65520.1"/>
    <property type="gene ID" value="AT1G65520"/>
</dbReference>
<dbReference type="KEGG" id="ath:AT1G65520"/>
<dbReference type="Araport" id="AT1G65520"/>
<dbReference type="TAIR" id="AT1G65520">
    <property type="gene designation" value="ECI1"/>
</dbReference>
<dbReference type="eggNOG" id="ENOG502QSD1">
    <property type="taxonomic scope" value="Eukaryota"/>
</dbReference>
<dbReference type="HOGENOM" id="CLU_009834_3_2_1"/>
<dbReference type="InParanoid" id="O04469"/>
<dbReference type="OMA" id="MPFTVGM"/>
<dbReference type="PhylomeDB" id="O04469"/>
<dbReference type="BioCyc" id="ARA:AT1G65520-MONOMER"/>
<dbReference type="BioCyc" id="MetaCyc:AT1G65520-MONOMER"/>
<dbReference type="UniPathway" id="UPA00659"/>
<dbReference type="PRO" id="PR:O04469"/>
<dbReference type="Proteomes" id="UP000006548">
    <property type="component" value="Chromosome 1"/>
</dbReference>
<dbReference type="ExpressionAtlas" id="O04469">
    <property type="expression patterns" value="baseline and differential"/>
</dbReference>
<dbReference type="GO" id="GO:0005777">
    <property type="term" value="C:peroxisome"/>
    <property type="evidence" value="ECO:0007005"/>
    <property type="project" value="TAIR"/>
</dbReference>
<dbReference type="GO" id="GO:0004165">
    <property type="term" value="F:delta(3)-delta(2)-enoyl-CoA isomerase activity"/>
    <property type="evidence" value="ECO:0007669"/>
    <property type="project" value="UniProtKB-EC"/>
</dbReference>
<dbReference type="GO" id="GO:0006635">
    <property type="term" value="P:fatty acid beta-oxidation"/>
    <property type="evidence" value="ECO:0007669"/>
    <property type="project" value="UniProtKB-UniPathway"/>
</dbReference>
<dbReference type="GO" id="GO:0009062">
    <property type="term" value="P:fatty acid catabolic process"/>
    <property type="evidence" value="ECO:0000315"/>
    <property type="project" value="TAIR"/>
</dbReference>
<dbReference type="CDD" id="cd06558">
    <property type="entry name" value="crotonase-like"/>
    <property type="match status" value="1"/>
</dbReference>
<dbReference type="FunFam" id="3.90.226.10:FF:000049">
    <property type="entry name" value="Enoyl-CoA delta isomerase 3"/>
    <property type="match status" value="1"/>
</dbReference>
<dbReference type="Gene3D" id="3.90.226.10">
    <property type="entry name" value="2-enoyl-CoA Hydratase, Chain A, domain 1"/>
    <property type="match status" value="1"/>
</dbReference>
<dbReference type="InterPro" id="IPR029045">
    <property type="entry name" value="ClpP/crotonase-like_dom_sf"/>
</dbReference>
<dbReference type="InterPro" id="IPR001753">
    <property type="entry name" value="Enoyl-CoA_hydra/iso"/>
</dbReference>
<dbReference type="PANTHER" id="PTHR11941:SF84">
    <property type="entry name" value="ENOYL-COA DELTA ISOMERASE 1, PEROXISOMAL"/>
    <property type="match status" value="1"/>
</dbReference>
<dbReference type="PANTHER" id="PTHR11941">
    <property type="entry name" value="ENOYL-COA HYDRATASE-RELATED"/>
    <property type="match status" value="1"/>
</dbReference>
<dbReference type="Pfam" id="PF00378">
    <property type="entry name" value="ECH_1"/>
    <property type="match status" value="1"/>
</dbReference>
<dbReference type="SUPFAM" id="SSF52096">
    <property type="entry name" value="ClpP/crotonase"/>
    <property type="match status" value="1"/>
</dbReference>
<sequence>MCSLEKRDRLFILKLTGDGEHRLNPTLLDSLRSTINQIRSDPSFSQSVLITTSDGKFFSNGYDLALAESNPSLSVVMDAKLRSLVADLISLPMPTIAAVTGHASAAGCILAMSHDYVLMRRDRGFLYMSELDIELIVPAWFMAVIRGKIGSPAARRDVMLTAAKVTADVGVKMGIVDSAYGSAAETVEAAIKLGEEIVQRGGDGHVYGKMRESLLREVLIHTIGEYESGSSVVRSTGSKL</sequence>
<comment type="function">
    <text evidence="2">Able to isomerize both 3-cis and 3-trans double bonds into the 2-trans form in a range of enoyl-CoA species. Essential for the beta oxidation of unsaturated fatty acids.</text>
</comment>
<comment type="catalytic activity">
    <reaction evidence="2">
        <text>a (3Z)-enoyl-CoA = a 4-saturated (2E)-enoyl-CoA</text>
        <dbReference type="Rhea" id="RHEA:45900"/>
        <dbReference type="ChEBI" id="CHEBI:85097"/>
        <dbReference type="ChEBI" id="CHEBI:85489"/>
        <dbReference type="EC" id="5.3.3.8"/>
    </reaction>
</comment>
<comment type="catalytic activity">
    <reaction evidence="2">
        <text>a (3E)-enoyl-CoA = a 4-saturated (2E)-enoyl-CoA</text>
        <dbReference type="Rhea" id="RHEA:45228"/>
        <dbReference type="ChEBI" id="CHEBI:58521"/>
        <dbReference type="ChEBI" id="CHEBI:85097"/>
        <dbReference type="EC" id="5.3.3.8"/>
    </reaction>
</comment>
<comment type="pathway">
    <text evidence="4">Lipid metabolism; fatty acid beta-oxidation.</text>
</comment>
<comment type="subcellular location">
    <subcellularLocation>
        <location evidence="2">Peroxisome</location>
    </subcellularLocation>
</comment>
<comment type="similarity">
    <text evidence="4">Belongs to the enoyl-CoA hydratase/isomerase family.</text>
</comment>